<sequence length="483" mass="54961">MKRKSEGRSSWAAATCSPCCSLTSPSVKKIRSPTQQDPRHRDPQDDVYLDITDRLRLAILYSRPKSASNVHYFSIDNELEYENFSEDFGPLNLAMVYRYCCKINKKLKSITMLRKKIVHFTGSDQRKQANAAFLVGCYMVIYLGRTPEEAYRTLIFGDTSYIPFRDAAYGSCNFYITLLDCFHAVKKAMQYGFLNFNSFNLDEYEHYEKAENGDLNWIIPDRFIAFCGPHSRARLESGYHQHSPETYIQYFKNRNVTTIIRLNKKMYDAKCFTDAGFDHHDLFFADGSSPTDAIVKGFLDICENAEGAIAVHCKAGLGRTGTLIACYIMKHYRMTAAETIAWVRICRPGLVIGPQQQFLVMKQTSLWLEGDYFCQKLKGQENGQHRAAFPKLHSGVDDISINGVENQDQQEPEPYSDDDEINGGTQGDRLRALKSRRQSKTNAILLTCPLAVLTSALCSVVIWWIVCDYILPILLFCLDGFGT</sequence>
<gene>
    <name evidence="2" type="primary">CDC14C</name>
    <name evidence="8" type="synonym">CDC14Bretro</name>
</gene>
<name>CC14C_SYMSY</name>
<accession>A6N3Q4</accession>
<protein>
    <recommendedName>
        <fullName evidence="2">Dual specificity protein phosphatase CDC14C</fullName>
        <ecNumber>3.1.3.16</ecNumber>
        <ecNumber>3.1.3.48</ecNumber>
    </recommendedName>
    <alternativeName>
        <fullName>CDC14 cell division cycle 14 homolog C</fullName>
    </alternativeName>
</protein>
<feature type="chain" id="PRO_0000315823" description="Dual specificity protein phosphatase CDC14C">
    <location>
        <begin position="1"/>
        <end position="483"/>
    </location>
</feature>
<feature type="transmembrane region" description="Helical" evidence="3">
    <location>
        <begin position="444"/>
        <end position="466"/>
    </location>
</feature>
<feature type="domain" description="Tyrosine-protein phosphatase" evidence="4">
    <location>
        <begin position="213"/>
        <end position="373"/>
    </location>
</feature>
<feature type="region of interest" description="Disordered" evidence="6">
    <location>
        <begin position="1"/>
        <end position="45"/>
    </location>
</feature>
<feature type="region of interest" description="A" evidence="1">
    <location>
        <begin position="43"/>
        <end position="197"/>
    </location>
</feature>
<feature type="region of interest" description="Linker" evidence="1">
    <location>
        <begin position="198"/>
        <end position="211"/>
    </location>
</feature>
<feature type="region of interest" description="B" evidence="1">
    <location>
        <begin position="212"/>
        <end position="378"/>
    </location>
</feature>
<feature type="region of interest" description="Disordered" evidence="6">
    <location>
        <begin position="407"/>
        <end position="426"/>
    </location>
</feature>
<feature type="short sequence motif" description="Nucleolar localization signal" evidence="1">
    <location>
        <begin position="1"/>
        <end position="53"/>
    </location>
</feature>
<feature type="compositionally biased region" description="Low complexity" evidence="6">
    <location>
        <begin position="12"/>
        <end position="26"/>
    </location>
</feature>
<feature type="compositionally biased region" description="Acidic residues" evidence="6">
    <location>
        <begin position="408"/>
        <end position="421"/>
    </location>
</feature>
<feature type="active site" description="Phosphocysteine intermediate" evidence="4">
    <location>
        <position position="313"/>
    </location>
</feature>
<organism>
    <name type="scientific">Symphalangus syndactylus</name>
    <name type="common">Siamang</name>
    <name type="synonym">Hylobates syndactylus</name>
    <dbReference type="NCBI Taxonomy" id="9590"/>
    <lineage>
        <taxon>Eukaryota</taxon>
        <taxon>Metazoa</taxon>
        <taxon>Chordata</taxon>
        <taxon>Craniata</taxon>
        <taxon>Vertebrata</taxon>
        <taxon>Euteleostomi</taxon>
        <taxon>Mammalia</taxon>
        <taxon>Eutheria</taxon>
        <taxon>Euarchontoglires</taxon>
        <taxon>Primates</taxon>
        <taxon>Haplorrhini</taxon>
        <taxon>Catarrhini</taxon>
        <taxon>Hylobatidae</taxon>
        <taxon>Symphalangus</taxon>
    </lineage>
</organism>
<comment type="function">
    <text evidence="1">Dual-specificity phosphatase. Preferentially dephosphorylates proteins modified by proline-directed kinases (By similarity).</text>
</comment>
<comment type="catalytic activity">
    <reaction evidence="5">
        <text>O-phospho-L-tyrosyl-[protein] + H2O = L-tyrosyl-[protein] + phosphate</text>
        <dbReference type="Rhea" id="RHEA:10684"/>
        <dbReference type="Rhea" id="RHEA-COMP:10136"/>
        <dbReference type="Rhea" id="RHEA-COMP:20101"/>
        <dbReference type="ChEBI" id="CHEBI:15377"/>
        <dbReference type="ChEBI" id="CHEBI:43474"/>
        <dbReference type="ChEBI" id="CHEBI:46858"/>
        <dbReference type="ChEBI" id="CHEBI:61978"/>
        <dbReference type="EC" id="3.1.3.48"/>
    </reaction>
</comment>
<comment type="catalytic activity">
    <reaction>
        <text>O-phospho-L-seryl-[protein] + H2O = L-seryl-[protein] + phosphate</text>
        <dbReference type="Rhea" id="RHEA:20629"/>
        <dbReference type="Rhea" id="RHEA-COMP:9863"/>
        <dbReference type="Rhea" id="RHEA-COMP:11604"/>
        <dbReference type="ChEBI" id="CHEBI:15377"/>
        <dbReference type="ChEBI" id="CHEBI:29999"/>
        <dbReference type="ChEBI" id="CHEBI:43474"/>
        <dbReference type="ChEBI" id="CHEBI:83421"/>
        <dbReference type="EC" id="3.1.3.16"/>
    </reaction>
</comment>
<comment type="catalytic activity">
    <reaction>
        <text>O-phospho-L-threonyl-[protein] + H2O = L-threonyl-[protein] + phosphate</text>
        <dbReference type="Rhea" id="RHEA:47004"/>
        <dbReference type="Rhea" id="RHEA-COMP:11060"/>
        <dbReference type="Rhea" id="RHEA-COMP:11605"/>
        <dbReference type="ChEBI" id="CHEBI:15377"/>
        <dbReference type="ChEBI" id="CHEBI:30013"/>
        <dbReference type="ChEBI" id="CHEBI:43474"/>
        <dbReference type="ChEBI" id="CHEBI:61977"/>
        <dbReference type="EC" id="3.1.3.16"/>
    </reaction>
</comment>
<comment type="subcellular location">
    <subcellularLocation>
        <location evidence="9">Membrane</location>
        <topology evidence="9">Single-pass membrane protein</topology>
    </subcellularLocation>
    <subcellularLocation>
        <location>Nucleus</location>
        <location>Nucleolus</location>
    </subcellularLocation>
    <subcellularLocation>
        <location evidence="7">Cytoplasm</location>
        <location evidence="7">Cytoskeleton</location>
    </subcellularLocation>
    <text evidence="1 7">Nucleolar during interphase (By similarity). Microtubular association (PubMed:18547142).</text>
</comment>
<comment type="domain">
    <text>Composed of two structurally equivalent A and B domains that adopt a dual specificity protein phosphatase (DSP) fold.</text>
</comment>
<comment type="miscellaneous">
    <text>May act as an autosomal functional substitute.</text>
</comment>
<comment type="similarity">
    <text evidence="9">Belongs to the protein-tyrosine phosphatase family. Non-receptor class CDC14 subfamily.</text>
</comment>
<dbReference type="EC" id="3.1.3.16"/>
<dbReference type="EC" id="3.1.3.48"/>
<dbReference type="EMBL" id="EF606887">
    <property type="protein sequence ID" value="ABR10606.1"/>
    <property type="molecule type" value="Genomic_DNA"/>
</dbReference>
<dbReference type="SMR" id="A6N3Q4"/>
<dbReference type="GO" id="GO:0005737">
    <property type="term" value="C:cytoplasm"/>
    <property type="evidence" value="ECO:0007669"/>
    <property type="project" value="UniProtKB-KW"/>
</dbReference>
<dbReference type="GO" id="GO:0005856">
    <property type="term" value="C:cytoskeleton"/>
    <property type="evidence" value="ECO:0007669"/>
    <property type="project" value="UniProtKB-SubCell"/>
</dbReference>
<dbReference type="GO" id="GO:0016020">
    <property type="term" value="C:membrane"/>
    <property type="evidence" value="ECO:0007669"/>
    <property type="project" value="UniProtKB-SubCell"/>
</dbReference>
<dbReference type="GO" id="GO:0005730">
    <property type="term" value="C:nucleolus"/>
    <property type="evidence" value="ECO:0007669"/>
    <property type="project" value="UniProtKB-SubCell"/>
</dbReference>
<dbReference type="GO" id="GO:0004722">
    <property type="term" value="F:protein serine/threonine phosphatase activity"/>
    <property type="evidence" value="ECO:0007669"/>
    <property type="project" value="UniProtKB-EC"/>
</dbReference>
<dbReference type="GO" id="GO:0004725">
    <property type="term" value="F:protein tyrosine phosphatase activity"/>
    <property type="evidence" value="ECO:0007669"/>
    <property type="project" value="UniProtKB-EC"/>
</dbReference>
<dbReference type="CDD" id="cd14499">
    <property type="entry name" value="CDC14_C"/>
    <property type="match status" value="1"/>
</dbReference>
<dbReference type="CDD" id="cd17657">
    <property type="entry name" value="CDC14_N"/>
    <property type="match status" value="1"/>
</dbReference>
<dbReference type="FunFam" id="3.90.190.10:FF:000006">
    <property type="entry name" value="Dual specificity protein phosphatase CDC14B"/>
    <property type="match status" value="1"/>
</dbReference>
<dbReference type="FunFam" id="3.90.190.10:FF:000031">
    <property type="entry name" value="dual specificity protein phosphatase CDC14B isoform X1"/>
    <property type="match status" value="1"/>
</dbReference>
<dbReference type="Gene3D" id="3.90.190.10">
    <property type="entry name" value="Protein tyrosine phosphatase superfamily"/>
    <property type="match status" value="2"/>
</dbReference>
<dbReference type="InterPro" id="IPR044506">
    <property type="entry name" value="CDC14_C"/>
</dbReference>
<dbReference type="InterPro" id="IPR029260">
    <property type="entry name" value="DSPn"/>
</dbReference>
<dbReference type="InterPro" id="IPR029021">
    <property type="entry name" value="Prot-tyrosine_phosphatase-like"/>
</dbReference>
<dbReference type="InterPro" id="IPR050561">
    <property type="entry name" value="PTP"/>
</dbReference>
<dbReference type="InterPro" id="IPR016130">
    <property type="entry name" value="Tyr_Pase_AS"/>
</dbReference>
<dbReference type="InterPro" id="IPR003595">
    <property type="entry name" value="Tyr_Pase_cat"/>
</dbReference>
<dbReference type="InterPro" id="IPR000387">
    <property type="entry name" value="Tyr_Pase_dom"/>
</dbReference>
<dbReference type="InterPro" id="IPR020422">
    <property type="entry name" value="TYR_PHOSPHATASE_DUAL_dom"/>
</dbReference>
<dbReference type="PANTHER" id="PTHR23339">
    <property type="entry name" value="TYROSINE SPECIFIC PROTEIN PHOSPHATASE AND DUAL SPECIFICITY PROTEIN PHOSPHATASE"/>
    <property type="match status" value="1"/>
</dbReference>
<dbReference type="Pfam" id="PF14671">
    <property type="entry name" value="DSPn"/>
    <property type="match status" value="1"/>
</dbReference>
<dbReference type="Pfam" id="PF22785">
    <property type="entry name" value="Tc-R-P"/>
    <property type="match status" value="1"/>
</dbReference>
<dbReference type="SMART" id="SM00195">
    <property type="entry name" value="DSPc"/>
    <property type="match status" value="1"/>
</dbReference>
<dbReference type="SMART" id="SM00404">
    <property type="entry name" value="PTPc_motif"/>
    <property type="match status" value="1"/>
</dbReference>
<dbReference type="SUPFAM" id="SSF52799">
    <property type="entry name" value="(Phosphotyrosine protein) phosphatases II"/>
    <property type="match status" value="2"/>
</dbReference>
<dbReference type="PROSITE" id="PS00383">
    <property type="entry name" value="TYR_PHOSPHATASE_1"/>
    <property type="match status" value="1"/>
</dbReference>
<dbReference type="PROSITE" id="PS50056">
    <property type="entry name" value="TYR_PHOSPHATASE_2"/>
    <property type="match status" value="1"/>
</dbReference>
<dbReference type="PROSITE" id="PS50054">
    <property type="entry name" value="TYR_PHOSPHATASE_DUAL"/>
    <property type="match status" value="1"/>
</dbReference>
<reference key="1">
    <citation type="journal article" date="2008" name="PLoS Biol.">
        <title>Birth and rapid subcellular adaptation of a hominoid-specific CDC14 protein.</title>
        <authorList>
            <person name="Rosso L."/>
            <person name="Marques A.C."/>
            <person name="Weier M."/>
            <person name="Lambert N."/>
            <person name="Lambot M.A."/>
            <person name="Vanderhaeghen P."/>
            <person name="Kaessmann H."/>
        </authorList>
    </citation>
    <scope>NUCLEOTIDE SEQUENCE [GENOMIC DNA]</scope>
    <scope>SUBCELLULAR LOCATION</scope>
</reference>
<keyword id="KW-0963">Cytoplasm</keyword>
<keyword id="KW-0206">Cytoskeleton</keyword>
<keyword id="KW-0378">Hydrolase</keyword>
<keyword id="KW-0472">Membrane</keyword>
<keyword id="KW-0539">Nucleus</keyword>
<keyword id="KW-0904">Protein phosphatase</keyword>
<keyword id="KW-0812">Transmembrane</keyword>
<keyword id="KW-1133">Transmembrane helix</keyword>
<proteinExistence type="inferred from homology"/>
<evidence type="ECO:0000250" key="1"/>
<evidence type="ECO:0000250" key="2">
    <source>
        <dbReference type="UniProtKB" id="A4D256"/>
    </source>
</evidence>
<evidence type="ECO:0000255" key="3"/>
<evidence type="ECO:0000255" key="4">
    <source>
        <dbReference type="PROSITE-ProRule" id="PRU00160"/>
    </source>
</evidence>
<evidence type="ECO:0000255" key="5">
    <source>
        <dbReference type="PROSITE-ProRule" id="PRU10044"/>
    </source>
</evidence>
<evidence type="ECO:0000256" key="6">
    <source>
        <dbReference type="SAM" id="MobiDB-lite"/>
    </source>
</evidence>
<evidence type="ECO:0000269" key="7">
    <source>
    </source>
</evidence>
<evidence type="ECO:0000303" key="8">
    <source>
    </source>
</evidence>
<evidence type="ECO:0000305" key="9"/>